<reference key="1">
    <citation type="journal article" date="1993" name="Planta">
        <title>A possible explanation for the multiple polyadenylation sites in transcripts coding for a winged-bean leghemoglobin.</title>
        <authorList>
            <person name="Manen J.-F."/>
            <person name="Simon P."/>
        </authorList>
    </citation>
    <scope>NUCLEOTIDE SEQUENCE [MRNA]</scope>
    <scope>TISSUE SPECIFICITY</scope>
    <source>
        <strain>cv. UP599</strain>
        <tissue>Root nodule</tissue>
    </source>
</reference>
<organism>
    <name type="scientific">Psophocarpus tetragonolobus</name>
    <name type="common">Winged bean</name>
    <name type="synonym">Dolichos tetragonolobus</name>
    <dbReference type="NCBI Taxonomy" id="3891"/>
    <lineage>
        <taxon>Eukaryota</taxon>
        <taxon>Viridiplantae</taxon>
        <taxon>Streptophyta</taxon>
        <taxon>Embryophyta</taxon>
        <taxon>Tracheophyta</taxon>
        <taxon>Spermatophyta</taxon>
        <taxon>Magnoliopsida</taxon>
        <taxon>eudicotyledons</taxon>
        <taxon>Gunneridae</taxon>
        <taxon>Pentapetalae</taxon>
        <taxon>rosids</taxon>
        <taxon>fabids</taxon>
        <taxon>Fabales</taxon>
        <taxon>Fabaceae</taxon>
        <taxon>Papilionoideae</taxon>
        <taxon>50 kb inversion clade</taxon>
        <taxon>NPAAA clade</taxon>
        <taxon>indigoferoid/millettioid clade</taxon>
        <taxon>Phaseoleae</taxon>
        <taxon>Psophocarpus</taxon>
    </lineage>
</organism>
<comment type="function">
    <text evidence="3 5">Leghemoglobin that reversibly binds oxygen O(2) through a pentacoordinated heme iron (By similarity). In root nodules, facilitates the diffusion of oxygen to the bacteroids while preventing the bacterial nitrogenase from being inactivated by buffering dioxygen, nitric oxide and carbon monoxide, and promoting the formation of reactive oxygen species (ROS, e.g. H(2)O(2)) (By similarity). This role is essential for symbiotic nitrogen fixation (SNF) (By similarity).</text>
</comment>
<comment type="subunit">
    <text evidence="4">Monomer.</text>
</comment>
<comment type="subcellular location">
    <subcellularLocation>
        <location evidence="4">Cytoplasm</location>
        <location evidence="4">Cytosol</location>
    </subcellularLocation>
    <subcellularLocation>
        <location evidence="4">Nucleus</location>
    </subcellularLocation>
</comment>
<comment type="tissue specificity">
    <text evidence="7">Root nodules.</text>
</comment>
<comment type="PTM">
    <text evidence="1">Nitrated in effective nodules and particularly in hypoxic conditions; this mechanism may play a protective role in the symbiosis by buffering toxic peroxynitrite NO(2)(-). Nitration level decrease during nodule senescence.</text>
</comment>
<comment type="similarity">
    <text evidence="8">Belongs to the plant globin family.</text>
</comment>
<accession>P27199</accession>
<proteinExistence type="evidence at transcript level"/>
<name>LGB_PSOTE</name>
<keyword id="KW-0963">Cytoplasm</keyword>
<keyword id="KW-0349">Heme</keyword>
<keyword id="KW-0408">Iron</keyword>
<keyword id="KW-0479">Metal-binding</keyword>
<keyword id="KW-0944">Nitration</keyword>
<keyword id="KW-0535">Nitrogen fixation</keyword>
<keyword id="KW-0536">Nodulation</keyword>
<keyword id="KW-0539">Nucleus</keyword>
<keyword id="KW-0561">Oxygen transport</keyword>
<keyword id="KW-0813">Transport</keyword>
<dbReference type="EMBL" id="X65874">
    <property type="protein sequence ID" value="CAA46704.1"/>
    <property type="molecule type" value="mRNA"/>
</dbReference>
<dbReference type="EMBL" id="S65139">
    <property type="protein sequence ID" value="AAC60563.1"/>
    <property type="molecule type" value="mRNA"/>
</dbReference>
<dbReference type="PIR" id="S21456">
    <property type="entry name" value="S21456"/>
</dbReference>
<dbReference type="SMR" id="P27199"/>
<dbReference type="GO" id="GO:0005829">
    <property type="term" value="C:cytosol"/>
    <property type="evidence" value="ECO:0007669"/>
    <property type="project" value="UniProtKB-SubCell"/>
</dbReference>
<dbReference type="GO" id="GO:0005634">
    <property type="term" value="C:nucleus"/>
    <property type="evidence" value="ECO:0007669"/>
    <property type="project" value="UniProtKB-SubCell"/>
</dbReference>
<dbReference type="GO" id="GO:0020037">
    <property type="term" value="F:heme binding"/>
    <property type="evidence" value="ECO:0007669"/>
    <property type="project" value="InterPro"/>
</dbReference>
<dbReference type="GO" id="GO:0046872">
    <property type="term" value="F:metal ion binding"/>
    <property type="evidence" value="ECO:0007669"/>
    <property type="project" value="UniProtKB-KW"/>
</dbReference>
<dbReference type="GO" id="GO:0019825">
    <property type="term" value="F:oxygen binding"/>
    <property type="evidence" value="ECO:0007669"/>
    <property type="project" value="InterPro"/>
</dbReference>
<dbReference type="GO" id="GO:0005344">
    <property type="term" value="F:oxygen carrier activity"/>
    <property type="evidence" value="ECO:0007669"/>
    <property type="project" value="UniProtKB-KW"/>
</dbReference>
<dbReference type="GO" id="GO:0009877">
    <property type="term" value="P:nodulation"/>
    <property type="evidence" value="ECO:0007669"/>
    <property type="project" value="UniProtKB-KW"/>
</dbReference>
<dbReference type="Gene3D" id="1.10.490.10">
    <property type="entry name" value="Globins"/>
    <property type="match status" value="1"/>
</dbReference>
<dbReference type="InterPro" id="IPR000971">
    <property type="entry name" value="Globin"/>
</dbReference>
<dbReference type="InterPro" id="IPR009050">
    <property type="entry name" value="Globin-like_sf"/>
</dbReference>
<dbReference type="InterPro" id="IPR012292">
    <property type="entry name" value="Globin/Proto"/>
</dbReference>
<dbReference type="InterPro" id="IPR001032">
    <property type="entry name" value="Leghaemoglobin-like"/>
</dbReference>
<dbReference type="InterPro" id="IPR019824">
    <property type="entry name" value="Leghaemoglobin_Fe_BS"/>
</dbReference>
<dbReference type="PANTHER" id="PTHR22924">
    <property type="entry name" value="LEGHEMOGLOBIN-RELATED"/>
    <property type="match status" value="1"/>
</dbReference>
<dbReference type="PANTHER" id="PTHR22924:SF92">
    <property type="entry name" value="NON-SYMBIOTIC HEMOGLOBIN 2"/>
    <property type="match status" value="1"/>
</dbReference>
<dbReference type="Pfam" id="PF00042">
    <property type="entry name" value="Globin"/>
    <property type="match status" value="1"/>
</dbReference>
<dbReference type="PRINTS" id="PR00188">
    <property type="entry name" value="PLANTGLOBIN"/>
</dbReference>
<dbReference type="SUPFAM" id="SSF46458">
    <property type="entry name" value="Globin-like"/>
    <property type="match status" value="1"/>
</dbReference>
<dbReference type="PROSITE" id="PS01033">
    <property type="entry name" value="GLOBIN"/>
    <property type="match status" value="1"/>
</dbReference>
<dbReference type="PROSITE" id="PS00208">
    <property type="entry name" value="PLANT_GLOBIN"/>
    <property type="match status" value="1"/>
</dbReference>
<evidence type="ECO:0000250" key="1">
    <source>
        <dbReference type="UniProtKB" id="P02234"/>
    </source>
</evidence>
<evidence type="ECO:0000250" key="2">
    <source>
        <dbReference type="UniProtKB" id="P02236"/>
    </source>
</evidence>
<evidence type="ECO:0000250" key="3">
    <source>
        <dbReference type="UniProtKB" id="P02237"/>
    </source>
</evidence>
<evidence type="ECO:0000250" key="4">
    <source>
        <dbReference type="UniProtKB" id="P02240"/>
    </source>
</evidence>
<evidence type="ECO:0000250" key="5">
    <source>
        <dbReference type="UniProtKB" id="Q43296"/>
    </source>
</evidence>
<evidence type="ECO:0000255" key="6">
    <source>
        <dbReference type="PROSITE-ProRule" id="PRU00238"/>
    </source>
</evidence>
<evidence type="ECO:0000269" key="7">
    <source>
    </source>
</evidence>
<evidence type="ECO:0000305" key="8"/>
<feature type="initiator methionine" description="Removed" evidence="2">
    <location>
        <position position="1"/>
    </location>
</feature>
<feature type="chain" id="PRO_0000192999" description="Leghemoglobin">
    <location>
        <begin position="2"/>
        <end position="145"/>
    </location>
</feature>
<feature type="domain" description="Globin" evidence="6">
    <location>
        <begin position="3"/>
        <end position="145"/>
    </location>
</feature>
<feature type="binding site" evidence="4">
    <location>
        <position position="62"/>
    </location>
    <ligand>
        <name>O2</name>
        <dbReference type="ChEBI" id="CHEBI:15379"/>
    </ligand>
</feature>
<feature type="binding site" evidence="4">
    <location>
        <position position="65"/>
    </location>
    <ligand>
        <name>heme b</name>
        <dbReference type="ChEBI" id="CHEBI:60344"/>
    </ligand>
</feature>
<feature type="binding site" description="proximal binding residue" evidence="6">
    <location>
        <position position="93"/>
    </location>
    <ligand>
        <name>heme b</name>
        <dbReference type="ChEBI" id="CHEBI:60344"/>
    </ligand>
    <ligandPart>
        <name>Fe</name>
        <dbReference type="ChEBI" id="CHEBI:18248"/>
    </ligandPart>
</feature>
<feature type="binding site" evidence="4">
    <location>
        <position position="96"/>
    </location>
    <ligand>
        <name>heme b</name>
        <dbReference type="ChEBI" id="CHEBI:60344"/>
    </ligand>
</feature>
<feature type="modified residue" description="Nitrated tyrosine" evidence="1">
    <location>
        <position position="26"/>
    </location>
</feature>
<feature type="modified residue" description="Nitrated tyrosine" evidence="1">
    <location>
        <position position="31"/>
    </location>
</feature>
<feature type="modified residue" description="Nitrated tyrosine" evidence="1">
    <location>
        <position position="134"/>
    </location>
</feature>
<sequence length="145" mass="15551">MGGFTEKQEALVNSSYEAFKANVPQYSVVFYTSILEKAPAAKDLFPFLANGVDPTNPKLIGHAEKLFGLVHDSAAQLRAKGAVVADAALGSLHAQKGVTDPQFVVVKEALLKTVKEAVGDKWSDELSNAWEVAYNELAAALKKAF</sequence>
<protein>
    <recommendedName>
        <fullName>Leghemoglobin</fullName>
    </recommendedName>
</protein>